<feature type="initiator methionine" description="Removed; by host">
    <location>
        <position position="1"/>
    </location>
</feature>
<feature type="chain" id="PRO_0000196561" description="Transglycosylase">
    <location>
        <begin position="2"/>
        <end position="265"/>
    </location>
</feature>
<feature type="transmembrane region" description="Helical" evidence="1">
    <location>
        <begin position="219"/>
        <end position="239"/>
    </location>
</feature>
<feature type="region of interest" description="Slt-type domain">
    <location>
        <begin position="19"/>
        <end position="98"/>
    </location>
</feature>
<feature type="active site" evidence="2">
    <location>
        <position position="32"/>
    </location>
</feature>
<feature type="splice variant" id="VSP_022588" description="In isoform Protein P14." evidence="7">
    <location>
        <begin position="1"/>
        <end position="115"/>
    </location>
</feature>
<organismHost>
    <name type="scientific">Acinetobacter calcoaceticus</name>
    <dbReference type="NCBI Taxonomy" id="471"/>
</organismHost>
<organismHost>
    <name type="scientific">Escherichia coli</name>
    <dbReference type="NCBI Taxonomy" id="562"/>
</organismHost>
<organismHost>
    <name type="scientific">Proteus mirabilis</name>
    <dbReference type="NCBI Taxonomy" id="584"/>
</organismHost>
<organismHost>
    <name type="scientific">Pseudomonas aeruginosa</name>
    <dbReference type="NCBI Taxonomy" id="287"/>
</organismHost>
<organismHost>
    <name type="scientific">Pseudomonas fluorescens</name>
    <dbReference type="NCBI Taxonomy" id="294"/>
</organismHost>
<organismHost>
    <name type="scientific">Pseudomonas putida</name>
    <name type="common">Arthrobacter siderocapsulatus</name>
    <dbReference type="NCBI Taxonomy" id="303"/>
</organismHost>
<organismHost>
    <name type="scientific">Salmonella typhimurium</name>
    <dbReference type="NCBI Taxonomy" id="90371"/>
</organismHost>
<organismHost>
    <name type="scientific">Vibrio cholerae</name>
    <dbReference type="NCBI Taxonomy" id="666"/>
</organismHost>
<name>EXLYS_BPPRD</name>
<evidence type="ECO:0000255" key="1"/>
<evidence type="ECO:0000255" key="2">
    <source>
        <dbReference type="PROSITE-ProRule" id="PRU10071"/>
    </source>
</evidence>
<evidence type="ECO:0000269" key="3">
    <source>
    </source>
</evidence>
<evidence type="ECO:0000269" key="4">
    <source>
    </source>
</evidence>
<evidence type="ECO:0000269" key="5">
    <source>
    </source>
</evidence>
<evidence type="ECO:0000303" key="6">
    <source>
    </source>
</evidence>
<evidence type="ECO:0000305" key="7"/>
<keyword id="KW-0024">Alternative initiation</keyword>
<keyword id="KW-0929">Antimicrobial</keyword>
<keyword id="KW-0081">Bacteriolytic enzyme</keyword>
<keyword id="KW-1231">Capsid inner membrane protein</keyword>
<keyword id="KW-1235">Degradation of host cell envelope components during virus entry</keyword>
<keyword id="KW-1236">Degradation of host peptidoglycans during virus entry</keyword>
<keyword id="KW-0903">Direct protein sequencing</keyword>
<keyword id="KW-0456">Lyase</keyword>
<keyword id="KW-0472">Membrane</keyword>
<keyword id="KW-1185">Reference proteome</keyword>
<keyword id="KW-0812">Transmembrane</keyword>
<keyword id="KW-1133">Transmembrane helix</keyword>
<keyword id="KW-1171">Viral genome ejection through host cell envelope</keyword>
<keyword id="KW-1162">Viral penetration into host cytoplasm</keyword>
<keyword id="KW-0946">Virion</keyword>
<keyword id="KW-1160">Virus entry into host cell</keyword>
<organism>
    <name type="scientific">Enterobacteria phage PRD1</name>
    <name type="common">Bacteriophage PRD1</name>
    <dbReference type="NCBI Taxonomy" id="10658"/>
    <lineage>
        <taxon>Viruses</taxon>
        <taxon>Varidnaviria</taxon>
        <taxon>Bamfordvirae</taxon>
        <taxon>Preplasmiviricota</taxon>
        <taxon>Tectiliviricetes</taxon>
        <taxon>Kalamavirales</taxon>
        <taxon>Tectiviridae</taxon>
        <taxon>Alphatectivirus</taxon>
        <taxon>Alphatectivirus PRD1</taxon>
    </lineage>
</organism>
<accession>P27380</accession>
<accession>Q3T4M0</accession>
<accession>Q3T4M1</accession>
<gene>
    <name type="primary">VII</name>
</gene>
<sequence length="265" mass="27074">MSGALQWWETIGAASAQYNLDPRLVAGVVQTESSGNPRTTSGVGAMGLMQLMPATAKSLGVTNAYDPTQNIYGGAALLRENLDRYGDVNTALLAYHGGTNQANWGAKTKSYPGKVMKNINLLFGNSGPVVTPAAGIAPVSGAQEMTAVNISDYTAPDLTGLTMGAGSPDFTGGASGSWGEENIPWYRVDKHVANAAGSAYDAVTDAVSAPVEAAGNYALRGVVIIAAVAIVVVGLYFLFQDEINSAAMKMIPAGKAAGAAAKALA</sequence>
<protein>
    <recommendedName>
        <fullName>Transglycosylase</fullName>
        <ecNumber evidence="3">4.2.2.n1</ecNumber>
    </recommendedName>
    <alternativeName>
        <fullName>Protein P7</fullName>
    </alternativeName>
</protein>
<comment type="function">
    <molecule>Isoform Transglycosylase P7</molecule>
    <text evidence="5">Component of the phage ejection machinery which acts as an exolysin. Muralytic protein involved in host peptidoglycan digestion necessary for viral DNA entry into the host cell.</text>
</comment>
<comment type="function">
    <molecule>Isoform Protein P14</molecule>
    <text evidence="5">Does not display any enzymatic activity. Required for DNA injection in the membrane transformation event. Involved in the formation of the membrane tail tube to connect the virus interior with the host cytosol. Essential for viral infectivity.</text>
</comment>
<comment type="catalytic activity">
    <reaction evidence="3">
        <text>Exolytic cleavage of the (1-&gt;4)-beta-glycosidic linkage between N-acetylmuramic acid (MurNAc) and N-acetylglucosamine (GlcNAc) residues in peptidoglycan, from either the reducing or the non-reducing ends of the peptidoglycan chains, with concomitant formation of a 1,6-anhydrobond in the MurNAc residue.</text>
        <dbReference type="EC" id="4.2.2.n1"/>
    </reaction>
</comment>
<comment type="subunit">
    <text evidence="7">Heteromultimer composed of proteins P7 and P14.</text>
</comment>
<comment type="subcellular location">
    <molecule>Isoform Transglycosylase P7</molecule>
    <subcellularLocation>
        <location evidence="4">Virion membrane</location>
        <topology evidence="4">Single-pass membrane protein</topology>
    </subcellularLocation>
    <text evidence="6">Part of the capsid inner membrane. Approximately 20 copies per virion.</text>
</comment>
<comment type="subcellular location">
    <molecule>Isoform Protein P14</molecule>
    <subcellularLocation>
        <location evidence="4">Virion membrane</location>
        <topology evidence="7">Single-pass membrane protein</topology>
    </subcellularLocation>
    <text evidence="6">Approximately 20 copies per virion.</text>
</comment>
<comment type="alternative products">
    <event type="alternative initiation"/>
    <isoform>
        <id>P27380-1</id>
        <name evidence="3">Transglycosylase P7</name>
        <sequence type="displayed"/>
    </isoform>
    <isoform>
        <id>P27380-2</id>
        <name evidence="3">Protein P14</name>
        <sequence type="described" ref="VSP_022588"/>
    </isoform>
</comment>
<comment type="similarity">
    <text evidence="7">Belongs to the transglycosylase Slt family.</text>
</comment>
<dbReference type="EC" id="4.2.2.n1" evidence="3"/>
<dbReference type="EMBL" id="AY848689">
    <property type="protein sequence ID" value="AAX45907.1"/>
    <property type="molecule type" value="Genomic_DNA"/>
</dbReference>
<dbReference type="EMBL" id="AY848689">
    <property type="protein sequence ID" value="AAX45925.1"/>
    <property type="molecule type" value="Genomic_DNA"/>
</dbReference>
<dbReference type="PIR" id="B36777">
    <property type="entry name" value="WMBPG7"/>
</dbReference>
<dbReference type="RefSeq" id="NP_040700.1">
    <property type="nucleotide sequence ID" value="NC_001421.2"/>
</dbReference>
<dbReference type="RefSeq" id="YP_001542614.1">
    <property type="nucleotide sequence ID" value="NC_001421.2"/>
</dbReference>
<dbReference type="RefSeq" id="YP_009639979.1">
    <molecule id="P27380-1"/>
    <property type="nucleotide sequence ID" value="NC_001421.2"/>
</dbReference>
<dbReference type="SMR" id="P27380"/>
<dbReference type="CAZy" id="GH23">
    <property type="family name" value="Glycoside Hydrolase Family 23"/>
</dbReference>
<dbReference type="GeneID" id="1260931"/>
<dbReference type="OrthoDB" id="292at10239"/>
<dbReference type="Proteomes" id="UP000002143">
    <property type="component" value="Segment"/>
</dbReference>
<dbReference type="GO" id="GO:0016020">
    <property type="term" value="C:membrane"/>
    <property type="evidence" value="ECO:0007669"/>
    <property type="project" value="UniProtKB-KW"/>
</dbReference>
<dbReference type="GO" id="GO:0039641">
    <property type="term" value="C:viral inner membrane"/>
    <property type="evidence" value="ECO:0007669"/>
    <property type="project" value="UniProtKB-KW"/>
</dbReference>
<dbReference type="GO" id="GO:0055036">
    <property type="term" value="C:virion membrane"/>
    <property type="evidence" value="ECO:0000314"/>
    <property type="project" value="CACAO"/>
</dbReference>
<dbReference type="GO" id="GO:0003796">
    <property type="term" value="F:lysozyme activity"/>
    <property type="evidence" value="ECO:0000314"/>
    <property type="project" value="CACAO"/>
</dbReference>
<dbReference type="GO" id="GO:0008933">
    <property type="term" value="F:peptidoglycan lytic transglycosylase activity"/>
    <property type="evidence" value="ECO:0007669"/>
    <property type="project" value="InterPro"/>
</dbReference>
<dbReference type="GO" id="GO:0042742">
    <property type="term" value="P:defense response to bacterium"/>
    <property type="evidence" value="ECO:0007669"/>
    <property type="project" value="UniProtKB-KW"/>
</dbReference>
<dbReference type="GO" id="GO:0031640">
    <property type="term" value="P:killing of cells of another organism"/>
    <property type="evidence" value="ECO:0007669"/>
    <property type="project" value="UniProtKB-KW"/>
</dbReference>
<dbReference type="GO" id="GO:0000270">
    <property type="term" value="P:peptidoglycan metabolic process"/>
    <property type="evidence" value="ECO:0007669"/>
    <property type="project" value="InterPro"/>
</dbReference>
<dbReference type="GO" id="GO:0098994">
    <property type="term" value="P:symbiont entry into host cell via disruption of host cell envelope"/>
    <property type="evidence" value="ECO:0007669"/>
    <property type="project" value="UniProtKB-KW"/>
</dbReference>
<dbReference type="GO" id="GO:0098932">
    <property type="term" value="P:symbiont entry into host cell via disruption of host cell wall peptidoglycan"/>
    <property type="evidence" value="ECO:0007669"/>
    <property type="project" value="UniProtKB-KW"/>
</dbReference>
<dbReference type="CDD" id="cd00254">
    <property type="entry name" value="LT-like"/>
    <property type="match status" value="1"/>
</dbReference>
<dbReference type="Gene3D" id="1.10.530.10">
    <property type="match status" value="1"/>
</dbReference>
<dbReference type="InterPro" id="IPR023346">
    <property type="entry name" value="Lysozyme-like_dom_sf"/>
</dbReference>
<dbReference type="InterPro" id="IPR000189">
    <property type="entry name" value="Transglyc_AS"/>
</dbReference>
<dbReference type="InterPro" id="IPR008258">
    <property type="entry name" value="Transglycosylase_SLT_dom_1"/>
</dbReference>
<dbReference type="PANTHER" id="PTHR37423:SF2">
    <property type="entry name" value="MEMBRANE-BOUND LYTIC MUREIN TRANSGLYCOSYLASE C"/>
    <property type="match status" value="1"/>
</dbReference>
<dbReference type="PANTHER" id="PTHR37423">
    <property type="entry name" value="SOLUBLE LYTIC MUREIN TRANSGLYCOSYLASE-RELATED"/>
    <property type="match status" value="1"/>
</dbReference>
<dbReference type="Pfam" id="PF01464">
    <property type="entry name" value="SLT"/>
    <property type="match status" value="1"/>
</dbReference>
<dbReference type="SUPFAM" id="SSF53955">
    <property type="entry name" value="Lysozyme-like"/>
    <property type="match status" value="1"/>
</dbReference>
<dbReference type="PROSITE" id="PS00922">
    <property type="entry name" value="TRANSGLYCOSYLASE"/>
    <property type="match status" value="1"/>
</dbReference>
<proteinExistence type="evidence at protein level"/>
<reference key="1">
    <citation type="journal article" date="1991" name="Virology">
        <title>Genome organization of membrane-containing bacteriophage PRD1.</title>
        <authorList>
            <person name="Bamford J.K.H."/>
            <person name="Haenninen A.-L."/>
            <person name="Pakula T.M."/>
            <person name="Ojala P.M."/>
            <person name="Kalkkinen N."/>
            <person name="Frilander M."/>
            <person name="Bamford D.H."/>
        </authorList>
    </citation>
    <scope>NUCLEOTIDE SEQUENCE [GENOMIC DNA]</scope>
    <scope>PARTIAL PROTEIN SEQUENCE</scope>
</reference>
<reference key="2">
    <citation type="journal article" date="2005" name="J. Mol. Biol.">
        <title>A snapshot of viral evolution from genome analysis of the tectiviridae family.</title>
        <authorList>
            <person name="Saren A.M."/>
            <person name="Ravantti J.J."/>
            <person name="Benson S.D."/>
            <person name="Burnett R.M."/>
            <person name="Paulin L."/>
            <person name="Bamford D.H."/>
            <person name="Bamford J.K.H."/>
        </authorList>
    </citation>
    <scope>NUCLEOTIDE SEQUENCE [GENOMIC DNA]</scope>
</reference>
<reference key="3">
    <citation type="journal article" date="1994" name="Trends Biochem. Sci.">
        <title>A conserved domain in putative bacterial and bacteriophage transglycosylases.</title>
        <authorList>
            <person name="Koonin E.V."/>
            <person name="Rudd K.E."/>
        </authorList>
    </citation>
    <scope>SIMILARITY TO SLT</scope>
</reference>
<reference key="4">
    <citation type="journal article" date="2000" name="Mol. Microbiol.">
        <title>Bacteriophage PRD1 DNA entry uses a viral membrane-associated transglycosylase activity.</title>
        <authorList>
            <person name="Rydman P.S."/>
            <person name="Bamford D.H."/>
        </authorList>
    </citation>
    <scope>ALTERNATIVE INITIATION</scope>
    <scope>CATALYTIC ACTIVITY</scope>
</reference>
<reference key="5">
    <citation type="journal article" date="2002" name="J. Bacteriol.">
        <title>The lytic enzyme of bacteriophage PRD1 is associated with the viral membrane.</title>
        <authorList>
            <person name="Rydman P.S."/>
            <person name="Bamford D.H."/>
        </authorList>
    </citation>
    <scope>SUBCELLULAR LOCATION (P7)</scope>
    <scope>SUBCELLULAR LOCATION (P14)</scope>
</reference>
<reference key="6">
    <citation type="journal article" date="2002" name="Mol. Microbiol.">
        <title>Sequential model of phage PRD1 DNA delivery: active involvement of the viral membrane.</title>
        <authorList>
            <person name="Grahn A.M."/>
            <person name="Daugelavicius R."/>
            <person name="Bamford D.H."/>
        </authorList>
    </citation>
    <scope>FUNCTION (ISOFORM P7)</scope>
</reference>